<evidence type="ECO:0000255" key="1">
    <source>
        <dbReference type="HAMAP-Rule" id="MF_00226"/>
    </source>
</evidence>
<organism>
    <name type="scientific">Koribacter versatilis (strain Ellin345)</name>
    <dbReference type="NCBI Taxonomy" id="204669"/>
    <lineage>
        <taxon>Bacteria</taxon>
        <taxon>Pseudomonadati</taxon>
        <taxon>Acidobacteriota</taxon>
        <taxon>Terriglobia</taxon>
        <taxon>Terriglobales</taxon>
        <taxon>Candidatus Korobacteraceae</taxon>
        <taxon>Candidatus Korobacter</taxon>
    </lineage>
</organism>
<feature type="chain" id="PRO_1000058686" description="CinA-like protein">
    <location>
        <begin position="1"/>
        <end position="414"/>
    </location>
</feature>
<keyword id="KW-1185">Reference proteome</keyword>
<accession>Q1IPQ9</accession>
<name>CINAL_KORVE</name>
<gene>
    <name type="ordered locus">Acid345_2140</name>
</gene>
<dbReference type="EMBL" id="CP000360">
    <property type="protein sequence ID" value="ABF41141.1"/>
    <property type="molecule type" value="Genomic_DNA"/>
</dbReference>
<dbReference type="RefSeq" id="WP_011522942.1">
    <property type="nucleotide sequence ID" value="NC_008009.1"/>
</dbReference>
<dbReference type="SMR" id="Q1IPQ9"/>
<dbReference type="STRING" id="204669.Acid345_2140"/>
<dbReference type="EnsemblBacteria" id="ABF41141">
    <property type="protein sequence ID" value="ABF41141"/>
    <property type="gene ID" value="Acid345_2140"/>
</dbReference>
<dbReference type="KEGG" id="aba:Acid345_2140"/>
<dbReference type="eggNOG" id="COG1058">
    <property type="taxonomic scope" value="Bacteria"/>
</dbReference>
<dbReference type="eggNOG" id="COG1546">
    <property type="taxonomic scope" value="Bacteria"/>
</dbReference>
<dbReference type="HOGENOM" id="CLU_030805_9_3_0"/>
<dbReference type="OrthoDB" id="9801454at2"/>
<dbReference type="Proteomes" id="UP000002432">
    <property type="component" value="Chromosome"/>
</dbReference>
<dbReference type="CDD" id="cd00885">
    <property type="entry name" value="cinA"/>
    <property type="match status" value="1"/>
</dbReference>
<dbReference type="Gene3D" id="3.30.70.2860">
    <property type="match status" value="1"/>
</dbReference>
<dbReference type="Gene3D" id="3.90.950.20">
    <property type="entry name" value="CinA-like"/>
    <property type="match status" value="1"/>
</dbReference>
<dbReference type="Gene3D" id="3.40.980.10">
    <property type="entry name" value="MoaB/Mog-like domain"/>
    <property type="match status" value="1"/>
</dbReference>
<dbReference type="HAMAP" id="MF_00226_B">
    <property type="entry name" value="CinA_B"/>
    <property type="match status" value="1"/>
</dbReference>
<dbReference type="InterPro" id="IPR050101">
    <property type="entry name" value="CinA"/>
</dbReference>
<dbReference type="InterPro" id="IPR036653">
    <property type="entry name" value="CinA-like_C"/>
</dbReference>
<dbReference type="InterPro" id="IPR008136">
    <property type="entry name" value="CinA_C"/>
</dbReference>
<dbReference type="InterPro" id="IPR041424">
    <property type="entry name" value="CinA_KH"/>
</dbReference>
<dbReference type="InterPro" id="IPR008135">
    <property type="entry name" value="Competence-induced_CinA"/>
</dbReference>
<dbReference type="InterPro" id="IPR036425">
    <property type="entry name" value="MoaB/Mog-like_dom_sf"/>
</dbReference>
<dbReference type="InterPro" id="IPR001453">
    <property type="entry name" value="MoaB/Mog_dom"/>
</dbReference>
<dbReference type="NCBIfam" id="TIGR00200">
    <property type="entry name" value="cinA_nterm"/>
    <property type="match status" value="1"/>
</dbReference>
<dbReference type="NCBIfam" id="TIGR00199">
    <property type="entry name" value="PncC_domain"/>
    <property type="match status" value="1"/>
</dbReference>
<dbReference type="NCBIfam" id="NF001813">
    <property type="entry name" value="PRK00549.1"/>
    <property type="match status" value="1"/>
</dbReference>
<dbReference type="PANTHER" id="PTHR13939">
    <property type="entry name" value="NICOTINAMIDE-NUCLEOTIDE AMIDOHYDROLASE PNCC"/>
    <property type="match status" value="1"/>
</dbReference>
<dbReference type="PANTHER" id="PTHR13939:SF0">
    <property type="entry name" value="NMN AMIDOHYDROLASE-LIKE PROTEIN YFAY"/>
    <property type="match status" value="1"/>
</dbReference>
<dbReference type="Pfam" id="PF02464">
    <property type="entry name" value="CinA"/>
    <property type="match status" value="1"/>
</dbReference>
<dbReference type="Pfam" id="PF18146">
    <property type="entry name" value="CinA_KH"/>
    <property type="match status" value="1"/>
</dbReference>
<dbReference type="Pfam" id="PF00994">
    <property type="entry name" value="MoCF_biosynth"/>
    <property type="match status" value="1"/>
</dbReference>
<dbReference type="PIRSF" id="PIRSF006728">
    <property type="entry name" value="CinA"/>
    <property type="match status" value="1"/>
</dbReference>
<dbReference type="SMART" id="SM00852">
    <property type="entry name" value="MoCF_biosynth"/>
    <property type="match status" value="1"/>
</dbReference>
<dbReference type="SUPFAM" id="SSF142433">
    <property type="entry name" value="CinA-like"/>
    <property type="match status" value="1"/>
</dbReference>
<dbReference type="SUPFAM" id="SSF53218">
    <property type="entry name" value="Molybdenum cofactor biosynthesis proteins"/>
    <property type="match status" value="1"/>
</dbReference>
<protein>
    <recommendedName>
        <fullName evidence="1">CinA-like protein</fullName>
    </recommendedName>
</protein>
<reference key="1">
    <citation type="journal article" date="2009" name="Appl. Environ. Microbiol.">
        <title>Three genomes from the phylum Acidobacteria provide insight into the lifestyles of these microorganisms in soils.</title>
        <authorList>
            <person name="Ward N.L."/>
            <person name="Challacombe J.F."/>
            <person name="Janssen P.H."/>
            <person name="Henrissat B."/>
            <person name="Coutinho P.M."/>
            <person name="Wu M."/>
            <person name="Xie G."/>
            <person name="Haft D.H."/>
            <person name="Sait M."/>
            <person name="Badger J."/>
            <person name="Barabote R.D."/>
            <person name="Bradley B."/>
            <person name="Brettin T.S."/>
            <person name="Brinkac L.M."/>
            <person name="Bruce D."/>
            <person name="Creasy T."/>
            <person name="Daugherty S.C."/>
            <person name="Davidsen T.M."/>
            <person name="DeBoy R.T."/>
            <person name="Detter J.C."/>
            <person name="Dodson R.J."/>
            <person name="Durkin A.S."/>
            <person name="Ganapathy A."/>
            <person name="Gwinn-Giglio M."/>
            <person name="Han C.S."/>
            <person name="Khouri H."/>
            <person name="Kiss H."/>
            <person name="Kothari S.P."/>
            <person name="Madupu R."/>
            <person name="Nelson K.E."/>
            <person name="Nelson W.C."/>
            <person name="Paulsen I."/>
            <person name="Penn K."/>
            <person name="Ren Q."/>
            <person name="Rosovitz M.J."/>
            <person name="Selengut J.D."/>
            <person name="Shrivastava S."/>
            <person name="Sullivan S.A."/>
            <person name="Tapia R."/>
            <person name="Thompson L.S."/>
            <person name="Watkins K.L."/>
            <person name="Yang Q."/>
            <person name="Yu C."/>
            <person name="Zafar N."/>
            <person name="Zhou L."/>
            <person name="Kuske C.R."/>
        </authorList>
    </citation>
    <scope>NUCLEOTIDE SEQUENCE [LARGE SCALE GENOMIC DNA]</scope>
    <source>
        <strain>Ellin345</strain>
    </source>
</reference>
<proteinExistence type="inferred from homology"/>
<sequence length="414" mass="45284">MIAEIVAIGSELLTPFRQDTNSLYLTQRLNEMGVEVAFKNIVGDSRANLASVARTAIARSHIVLFMGGLGPTEDDLTREAVADALGLRLKRNPDLVAELYKRFASRRVTMPDNNMRQADVIAGAEIIQNDNGSAPGQFIEGEQDGQPRYIFLLPGPPHELKAMWNEKCHHTLRDRLPRAYIATRELRISSLGESTVDARVAPIYTKYKNVDTTILAKPGEVSLHLKSRAATMEQAQAAVDQLAAELEDELDDAVFSTNGESLEQIVGYYLQMRSGTISVAESCTGGLLAERLTNVSGSSRYFIGGVVVYSNQMKTLLADVPPLMIEEHGAVSRQVAVALAENFREITNSTIGVGITGIAGPTGGTEDKPVGLVYIAVADELGTDVVERRFPGDRERIRWWSSQVALDMVRKKLI</sequence>
<comment type="similarity">
    <text evidence="1">Belongs to the CinA family.</text>
</comment>